<dbReference type="EMBL" id="X52046">
    <property type="protein sequence ID" value="CAA36279.1"/>
    <property type="molecule type" value="Genomic_DNA"/>
</dbReference>
<dbReference type="EMBL" id="BC043089">
    <property type="protein sequence ID" value="AAH43089.1"/>
    <property type="molecule type" value="mRNA"/>
</dbReference>
<dbReference type="EMBL" id="BC058724">
    <property type="protein sequence ID" value="AAH58724.1"/>
    <property type="molecule type" value="mRNA"/>
</dbReference>
<dbReference type="EMBL" id="M18933">
    <property type="protein sequence ID" value="AAA37338.1"/>
    <property type="molecule type" value="mRNA"/>
</dbReference>
<dbReference type="EMBL" id="K03037">
    <property type="status" value="NOT_ANNOTATED_CDS"/>
    <property type="molecule type" value="Genomic_DNA"/>
</dbReference>
<dbReference type="EMBL" id="AK019448">
    <property type="protein sequence ID" value="BAB31724.1"/>
    <property type="molecule type" value="mRNA"/>
</dbReference>
<dbReference type="EMBL" id="X57983">
    <property type="protein sequence ID" value="CAA41048.1"/>
    <property type="molecule type" value="Genomic_DNA"/>
</dbReference>
<dbReference type="CCDS" id="CCDS35554.1"/>
<dbReference type="PIR" id="A27353">
    <property type="entry name" value="A27353"/>
</dbReference>
<dbReference type="PIR" id="S59856">
    <property type="entry name" value="S59856"/>
</dbReference>
<dbReference type="RefSeq" id="NP_034060.2">
    <property type="nucleotide sequence ID" value="NM_009930.2"/>
</dbReference>
<dbReference type="SMR" id="P08121"/>
<dbReference type="BioGRID" id="198815">
    <property type="interactions" value="11"/>
</dbReference>
<dbReference type="ComplexPortal" id="CPX-2958">
    <property type="entry name" value="Collagen type III trimer"/>
</dbReference>
<dbReference type="FunCoup" id="P08121">
    <property type="interactions" value="134"/>
</dbReference>
<dbReference type="IntAct" id="P08121">
    <property type="interactions" value="2"/>
</dbReference>
<dbReference type="STRING" id="10090.ENSMUSP00000085192"/>
<dbReference type="GlyCosmos" id="P08121">
    <property type="glycosylation" value="1 site, No reported glycans"/>
</dbReference>
<dbReference type="GlyGen" id="P08121">
    <property type="glycosylation" value="4 sites"/>
</dbReference>
<dbReference type="iPTMnet" id="P08121"/>
<dbReference type="PhosphoSitePlus" id="P08121"/>
<dbReference type="CPTAC" id="non-CPTAC-3364"/>
<dbReference type="jPOST" id="P08121"/>
<dbReference type="PaxDb" id="10090-ENSMUSP00000085192"/>
<dbReference type="PeptideAtlas" id="P08121"/>
<dbReference type="ProteomicsDB" id="283595"/>
<dbReference type="Pumba" id="P08121"/>
<dbReference type="Antibodypedia" id="3392">
    <property type="antibodies" value="785 antibodies from 41 providers"/>
</dbReference>
<dbReference type="DNASU" id="12825"/>
<dbReference type="Ensembl" id="ENSMUST00000087883.13">
    <property type="protein sequence ID" value="ENSMUSP00000085192.7"/>
    <property type="gene ID" value="ENSMUSG00000026043.19"/>
</dbReference>
<dbReference type="GeneID" id="12825"/>
<dbReference type="KEGG" id="mmu:12825"/>
<dbReference type="UCSC" id="uc007awq.2">
    <property type="organism name" value="mouse"/>
</dbReference>
<dbReference type="AGR" id="MGI:88453"/>
<dbReference type="CTD" id="1281"/>
<dbReference type="MGI" id="MGI:88453">
    <property type="gene designation" value="Col3a1"/>
</dbReference>
<dbReference type="VEuPathDB" id="HostDB:ENSMUSG00000026043"/>
<dbReference type="eggNOG" id="KOG3544">
    <property type="taxonomic scope" value="Eukaryota"/>
</dbReference>
<dbReference type="GeneTree" id="ENSGT00940000161229"/>
<dbReference type="HOGENOM" id="CLU_001074_2_3_1"/>
<dbReference type="InParanoid" id="P08121"/>
<dbReference type="OMA" id="NLDCPNP"/>
<dbReference type="OrthoDB" id="8939548at2759"/>
<dbReference type="PhylomeDB" id="P08121"/>
<dbReference type="TreeFam" id="TF344135"/>
<dbReference type="Reactome" id="R-MMU-1442490">
    <property type="pathway name" value="Collagen degradation"/>
</dbReference>
<dbReference type="Reactome" id="R-MMU-1474244">
    <property type="pathway name" value="Extracellular matrix organization"/>
</dbReference>
<dbReference type="Reactome" id="R-MMU-1650814">
    <property type="pathway name" value="Collagen biosynthesis and modifying enzymes"/>
</dbReference>
<dbReference type="Reactome" id="R-MMU-186797">
    <property type="pathway name" value="Signaling by PDGF"/>
</dbReference>
<dbReference type="Reactome" id="R-MMU-198933">
    <property type="pathway name" value="Immunoregulatory interactions between a Lymphoid and a non-Lymphoid cell"/>
</dbReference>
<dbReference type="Reactome" id="R-MMU-2022090">
    <property type="pathway name" value="Assembly of collagen fibrils and other multimeric structures"/>
</dbReference>
<dbReference type="Reactome" id="R-MMU-216083">
    <property type="pathway name" value="Integrin cell surface interactions"/>
</dbReference>
<dbReference type="Reactome" id="R-MMU-3000171">
    <property type="pathway name" value="Non-integrin membrane-ECM interactions"/>
</dbReference>
<dbReference type="Reactome" id="R-MMU-3000178">
    <property type="pathway name" value="ECM proteoglycans"/>
</dbReference>
<dbReference type="Reactome" id="R-MMU-419037">
    <property type="pathway name" value="NCAM1 interactions"/>
</dbReference>
<dbReference type="Reactome" id="R-MMU-8874081">
    <property type="pathway name" value="MET activates PTK2 signaling"/>
</dbReference>
<dbReference type="Reactome" id="R-MMU-8948216">
    <property type="pathway name" value="Collagen chain trimerization"/>
</dbReference>
<dbReference type="BioGRID-ORCS" id="12825">
    <property type="hits" value="0 hits in 77 CRISPR screens"/>
</dbReference>
<dbReference type="ChiTaRS" id="Col3a1">
    <property type="organism name" value="mouse"/>
</dbReference>
<dbReference type="PRO" id="PR:P08121"/>
<dbReference type="Proteomes" id="UP000000589">
    <property type="component" value="Chromosome 1"/>
</dbReference>
<dbReference type="RNAct" id="P08121">
    <property type="molecule type" value="protein"/>
</dbReference>
<dbReference type="Bgee" id="ENSMUSG00000026043">
    <property type="expression patterns" value="Expressed in efferent duct and 275 other cell types or tissues"/>
</dbReference>
<dbReference type="ExpressionAtlas" id="P08121">
    <property type="expression patterns" value="baseline and differential"/>
</dbReference>
<dbReference type="GO" id="GO:0005581">
    <property type="term" value="C:collagen trimer"/>
    <property type="evidence" value="ECO:0000314"/>
    <property type="project" value="MGI"/>
</dbReference>
<dbReference type="GO" id="GO:0005586">
    <property type="term" value="C:collagen type III trimer"/>
    <property type="evidence" value="ECO:0000314"/>
    <property type="project" value="MGI"/>
</dbReference>
<dbReference type="GO" id="GO:0062023">
    <property type="term" value="C:collagen-containing extracellular matrix"/>
    <property type="evidence" value="ECO:0007005"/>
    <property type="project" value="UniProtKB"/>
</dbReference>
<dbReference type="GO" id="GO:0031012">
    <property type="term" value="C:extracellular matrix"/>
    <property type="evidence" value="ECO:0000314"/>
    <property type="project" value="MGI"/>
</dbReference>
<dbReference type="GO" id="GO:0005615">
    <property type="term" value="C:extracellular space"/>
    <property type="evidence" value="ECO:0007005"/>
    <property type="project" value="BHF-UCL"/>
</dbReference>
<dbReference type="GO" id="GO:0005201">
    <property type="term" value="F:extracellular matrix structural constituent"/>
    <property type="evidence" value="ECO:0007669"/>
    <property type="project" value="Ensembl"/>
</dbReference>
<dbReference type="GO" id="GO:0005178">
    <property type="term" value="F:integrin binding"/>
    <property type="evidence" value="ECO:0007669"/>
    <property type="project" value="Ensembl"/>
</dbReference>
<dbReference type="GO" id="GO:0046872">
    <property type="term" value="F:metal ion binding"/>
    <property type="evidence" value="ECO:0007669"/>
    <property type="project" value="UniProtKB-KW"/>
</dbReference>
<dbReference type="GO" id="GO:0048407">
    <property type="term" value="F:platelet-derived growth factor binding"/>
    <property type="evidence" value="ECO:0000266"/>
    <property type="project" value="MGI"/>
</dbReference>
<dbReference type="GO" id="GO:0002020">
    <property type="term" value="F:protease binding"/>
    <property type="evidence" value="ECO:0007669"/>
    <property type="project" value="Ensembl"/>
</dbReference>
<dbReference type="GO" id="GO:0046332">
    <property type="term" value="F:SMAD binding"/>
    <property type="evidence" value="ECO:0000353"/>
    <property type="project" value="MGI"/>
</dbReference>
<dbReference type="GO" id="GO:0035904">
    <property type="term" value="P:aorta development"/>
    <property type="evidence" value="ECO:0000315"/>
    <property type="project" value="MGI"/>
</dbReference>
<dbReference type="GO" id="GO:0060414">
    <property type="term" value="P:aorta smooth muscle tissue morphogenesis"/>
    <property type="evidence" value="ECO:0000315"/>
    <property type="project" value="BHF-UCL"/>
</dbReference>
<dbReference type="GO" id="GO:0071711">
    <property type="term" value="P:basement membrane organization"/>
    <property type="evidence" value="ECO:0000315"/>
    <property type="project" value="MGI"/>
</dbReference>
<dbReference type="GO" id="GO:0001568">
    <property type="term" value="P:blood vessel development"/>
    <property type="evidence" value="ECO:0000315"/>
    <property type="project" value="MGI"/>
</dbReference>
<dbReference type="GO" id="GO:0051216">
    <property type="term" value="P:cartilage development"/>
    <property type="evidence" value="ECO:0000315"/>
    <property type="project" value="MGI"/>
</dbReference>
<dbReference type="GO" id="GO:0007160">
    <property type="term" value="P:cell-matrix adhesion"/>
    <property type="evidence" value="ECO:0007669"/>
    <property type="project" value="Ensembl"/>
</dbReference>
<dbReference type="GO" id="GO:0071230">
    <property type="term" value="P:cellular response to amino acid stimulus"/>
    <property type="evidence" value="ECO:0000314"/>
    <property type="project" value="MGI"/>
</dbReference>
<dbReference type="GO" id="GO:0021987">
    <property type="term" value="P:cerebral cortex development"/>
    <property type="evidence" value="ECO:0000315"/>
    <property type="project" value="UniProtKB"/>
</dbReference>
<dbReference type="GO" id="GO:0002062">
    <property type="term" value="P:chondrocyte differentiation"/>
    <property type="evidence" value="ECO:0000315"/>
    <property type="project" value="MGI"/>
</dbReference>
<dbReference type="GO" id="GO:0030199">
    <property type="term" value="P:collagen fibril organization"/>
    <property type="evidence" value="ECO:0000315"/>
    <property type="project" value="MGI"/>
</dbReference>
<dbReference type="GO" id="GO:0048565">
    <property type="term" value="P:digestive tract development"/>
    <property type="evidence" value="ECO:0000315"/>
    <property type="project" value="MGI"/>
</dbReference>
<dbReference type="GO" id="GO:0048251">
    <property type="term" value="P:elastic fiber assembly"/>
    <property type="evidence" value="ECO:0000315"/>
    <property type="project" value="MGI"/>
</dbReference>
<dbReference type="GO" id="GO:0060350">
    <property type="term" value="P:endochondral bone morphogenesis"/>
    <property type="evidence" value="ECO:0000315"/>
    <property type="project" value="MGI"/>
</dbReference>
<dbReference type="GO" id="GO:0030198">
    <property type="term" value="P:extracellular matrix organization"/>
    <property type="evidence" value="ECO:0000315"/>
    <property type="project" value="MGI"/>
</dbReference>
<dbReference type="GO" id="GO:0048144">
    <property type="term" value="P:fibroblast proliferation"/>
    <property type="evidence" value="ECO:0000315"/>
    <property type="project" value="MGI"/>
</dbReference>
<dbReference type="GO" id="GO:0010467">
    <property type="term" value="P:gene expression"/>
    <property type="evidence" value="ECO:0000315"/>
    <property type="project" value="MGI"/>
</dbReference>
<dbReference type="GO" id="GO:0007507">
    <property type="term" value="P:heart development"/>
    <property type="evidence" value="ECO:0007669"/>
    <property type="project" value="Ensembl"/>
</dbReference>
<dbReference type="GO" id="GO:0001701">
    <property type="term" value="P:in utero embryonic development"/>
    <property type="evidence" value="ECO:0000315"/>
    <property type="project" value="MGI"/>
</dbReference>
<dbReference type="GO" id="GO:0007229">
    <property type="term" value="P:integrin-mediated signaling pathway"/>
    <property type="evidence" value="ECO:0007669"/>
    <property type="project" value="Ensembl"/>
</dbReference>
<dbReference type="GO" id="GO:0021819">
    <property type="term" value="P:layer formation in cerebral cortex"/>
    <property type="evidence" value="ECO:0000315"/>
    <property type="project" value="MGI"/>
</dbReference>
<dbReference type="GO" id="GO:0036022">
    <property type="term" value="P:limb joint morphogenesis"/>
    <property type="evidence" value="ECO:0000315"/>
    <property type="project" value="MGI"/>
</dbReference>
<dbReference type="GO" id="GO:0030324">
    <property type="term" value="P:lung development"/>
    <property type="evidence" value="ECO:0000315"/>
    <property type="project" value="MGI"/>
</dbReference>
<dbReference type="GO" id="GO:0035264">
    <property type="term" value="P:multicellular organism growth"/>
    <property type="evidence" value="ECO:0000315"/>
    <property type="project" value="MGI"/>
</dbReference>
<dbReference type="GO" id="GO:0050777">
    <property type="term" value="P:negative regulation of immune response"/>
    <property type="evidence" value="ECO:0007669"/>
    <property type="project" value="Ensembl"/>
</dbReference>
<dbReference type="GO" id="GO:2001223">
    <property type="term" value="P:negative regulation of neuron migration"/>
    <property type="evidence" value="ECO:0000315"/>
    <property type="project" value="UniProtKB"/>
</dbReference>
<dbReference type="GO" id="GO:0001764">
    <property type="term" value="P:neuron migration"/>
    <property type="evidence" value="ECO:0000315"/>
    <property type="project" value="MGI"/>
</dbReference>
<dbReference type="GO" id="GO:0035025">
    <property type="term" value="P:positive regulation of Rho protein signal transduction"/>
    <property type="evidence" value="ECO:0000314"/>
    <property type="project" value="UniProtKB"/>
</dbReference>
<dbReference type="GO" id="GO:1990776">
    <property type="term" value="P:response to angiotensin"/>
    <property type="evidence" value="ECO:0000315"/>
    <property type="project" value="MGI"/>
</dbReference>
<dbReference type="GO" id="GO:0034097">
    <property type="term" value="P:response to cytokine"/>
    <property type="evidence" value="ECO:0007669"/>
    <property type="project" value="Ensembl"/>
</dbReference>
<dbReference type="GO" id="GO:0009314">
    <property type="term" value="P:response to radiation"/>
    <property type="evidence" value="ECO:0007669"/>
    <property type="project" value="Ensembl"/>
</dbReference>
<dbReference type="GO" id="GO:0043588">
    <property type="term" value="P:skin development"/>
    <property type="evidence" value="ECO:0000315"/>
    <property type="project" value="MGI"/>
</dbReference>
<dbReference type="GO" id="GO:0001894">
    <property type="term" value="P:tissue homeostasis"/>
    <property type="evidence" value="ECO:0000315"/>
    <property type="project" value="MGI"/>
</dbReference>
<dbReference type="GO" id="GO:0007179">
    <property type="term" value="P:transforming growth factor beta receptor signaling pathway"/>
    <property type="evidence" value="ECO:0007669"/>
    <property type="project" value="Ensembl"/>
</dbReference>
<dbReference type="GO" id="GO:0032905">
    <property type="term" value="P:transforming growth factor beta1 production"/>
    <property type="evidence" value="ECO:0000315"/>
    <property type="project" value="MGI"/>
</dbReference>
<dbReference type="GO" id="GO:0042060">
    <property type="term" value="P:wound healing"/>
    <property type="evidence" value="ECO:0007669"/>
    <property type="project" value="Ensembl"/>
</dbReference>
<dbReference type="FunFam" id="2.60.120.1000:FF:000001">
    <property type="entry name" value="Collagen alpha-1 type I chain"/>
    <property type="match status" value="1"/>
</dbReference>
<dbReference type="FunFam" id="2.10.70.10:FF:000013">
    <property type="entry name" value="Collagen, type I, alpha 1"/>
    <property type="match status" value="1"/>
</dbReference>
<dbReference type="Gene3D" id="2.60.120.1000">
    <property type="match status" value="1"/>
</dbReference>
<dbReference type="Gene3D" id="2.10.70.10">
    <property type="entry name" value="Complement Module, domain 1"/>
    <property type="match status" value="1"/>
</dbReference>
<dbReference type="InterPro" id="IPR008160">
    <property type="entry name" value="Collagen"/>
</dbReference>
<dbReference type="InterPro" id="IPR050149">
    <property type="entry name" value="Collagen_superfamily"/>
</dbReference>
<dbReference type="InterPro" id="IPR000885">
    <property type="entry name" value="Fib_collagen_C"/>
</dbReference>
<dbReference type="InterPro" id="IPR001007">
    <property type="entry name" value="VWF_dom"/>
</dbReference>
<dbReference type="PANTHER" id="PTHR24023">
    <property type="entry name" value="COLLAGEN ALPHA"/>
    <property type="match status" value="1"/>
</dbReference>
<dbReference type="PANTHER" id="PTHR24023:SF1082">
    <property type="entry name" value="COLLAGEN TRIPLE HELIX REPEAT"/>
    <property type="match status" value="1"/>
</dbReference>
<dbReference type="Pfam" id="PF01410">
    <property type="entry name" value="COLFI"/>
    <property type="match status" value="1"/>
</dbReference>
<dbReference type="Pfam" id="PF01391">
    <property type="entry name" value="Collagen"/>
    <property type="match status" value="4"/>
</dbReference>
<dbReference type="Pfam" id="PF00093">
    <property type="entry name" value="VWC"/>
    <property type="match status" value="1"/>
</dbReference>
<dbReference type="SMART" id="SM00038">
    <property type="entry name" value="COLFI"/>
    <property type="match status" value="1"/>
</dbReference>
<dbReference type="SMART" id="SM00214">
    <property type="entry name" value="VWC"/>
    <property type="match status" value="1"/>
</dbReference>
<dbReference type="SUPFAM" id="SSF57603">
    <property type="entry name" value="FnI-like domain"/>
    <property type="match status" value="1"/>
</dbReference>
<dbReference type="PROSITE" id="PS51461">
    <property type="entry name" value="NC1_FIB"/>
    <property type="match status" value="1"/>
</dbReference>
<dbReference type="PROSITE" id="PS01208">
    <property type="entry name" value="VWFC_1"/>
    <property type="match status" value="1"/>
</dbReference>
<dbReference type="PROSITE" id="PS50184">
    <property type="entry name" value="VWFC_2"/>
    <property type="match status" value="1"/>
</dbReference>
<evidence type="ECO:0000250" key="1"/>
<evidence type="ECO:0000250" key="2">
    <source>
        <dbReference type="UniProtKB" id="P02461"/>
    </source>
</evidence>
<evidence type="ECO:0000255" key="3">
    <source>
        <dbReference type="PROSITE-ProRule" id="PRU00220"/>
    </source>
</evidence>
<evidence type="ECO:0000255" key="4">
    <source>
        <dbReference type="PROSITE-ProRule" id="PRU00793"/>
    </source>
</evidence>
<evidence type="ECO:0000256" key="5">
    <source>
        <dbReference type="SAM" id="MobiDB-lite"/>
    </source>
</evidence>
<evidence type="ECO:0000269" key="6">
    <source>
    </source>
</evidence>
<protein>
    <recommendedName>
        <fullName>Collagen alpha-1(III) chain</fullName>
    </recommendedName>
</protein>
<sequence>MMSFVQSGTWFLLTLLHPTLILAQQSNVDELGCSHLGQSYESRDVWKPEPCQICVCDSGSVLCDDIICDEEPLDCPNPEIPFGECCAICPQPSTPAPVLPDGHGPQGPKGDPGPPGIPGRNGDPGLPGQPGLPGPPGSPGICESCPTGGQNYSPQFDSYDVKSGVGGMGGYPGPAGPPGPPGPPGSSGHPGSPGSPGYQGPPGEPGQAGPAGPPGPPGALGPAGPAGKDGESGRPGRPGERGLPGPPGIKGPAGMPGFPGMKGHRGFDGRNGEKGETGAPGLKGENGLPGDNGAPGPMGPRGAPGERGRPGLPGAAGARGNDGARGSDGQPGPPGPPGTAGFPGSPGAKGEVGPAGSPGSNGSPGQRGEPGPQGHAGAQGPPGPPGNNGSPGGKGEMGPAGIPGAPGLIGARGPPGPAGTNGIPGTRGPSGEPGKNGAKGEPGARGERGEAGSPGIPGPKGEDGKDGSPGEPGANGLPGAAGERGPSGFRGPAGPNGIPGEKGPPGERGGPGPAGPRGVAGEPGRDGTPGGPGIRGMPGSPGGPGNDGKPGPPGSQGESGRPGPPGPSGPRGQPGVMGFPGPKGNDGAPGKNGERGGPGGPGLPGPAGKNGETGPQGPPGPTGPAGDKGDSGPPGPQGLQGIPGTGGPPGENGKPGEPGPKGEVGAPGAPGGKGDSGAPGERGPPGTAGIPGARGGAGPPGPEGGKGPAGPPGPPGASGSPGLQGMPGERGGPGSPGPKGEKGEPGGAGADGVPGKDGPRGPAGPIGPPGPAGQPGDKGEGGSPGLPGIAGPRGGPGERGEHGPPGPAGFPGAPGQNGEPGAKGERGAPGEKGEGGPPGPAGPTGSSGPAGPPGPQGVKGERGSPGGPGTAGFPGGRGLPGPPGNNGNPGPPGPSGAPGKDGPPGPAGNSGSPGNPGIAGPKGDAGQPGEKGPPGAQGPPGSPGPLGIAGLTGARGLAGPPGMPGPRGSPGPQGIKGESGKPGASGHNGERGPPGPQGLPGQPGTAGEPGRDGNPGSDGQPGRDGSPGGKGDRGENGSPGAPGAPGHPGPPGPVGPSGKSGDRGETGPAGPSGAPGPAGARGAPGPQGPRGDKGETGERGSNGIKGHRGFPGNPGPPGSPGAAGHQGAIGSPGPAGPRGPVGPHGPPGKDGTSGHPGPIGPPGPRGNRGERGSEGSPGHPGQPGPPGPPGAPGPCCGGGAAAIAGVGGEKSGGFSPYYGDDPMDFKINTEEIMSSLKSVNGQIESLISPDGSRKNPARNCRDLKFCHPELKSGEYWVDPNQGCKMDAIKVFCNMETGETCINASPMTVPRKHWWTDSGAEKKHVWFGESMNGGFQFSYGPPDLPEDVVDVQLAFLRLLSSRASQNITYHCKNSIAYMDQASGNVKKSLKLMGSNEGEFKAEGNSKFTYTVLEDGCTKHTGEWSKTVFEYQTRKAMRLPIIDIAPYDIGGPDQEFGVDIGPVCFL</sequence>
<feature type="signal peptide" evidence="1">
    <location>
        <begin position="1"/>
        <end position="23"/>
    </location>
</feature>
<feature type="propeptide" id="PRO_0000005743" description="N-terminal propeptide">
    <location>
        <begin position="24"/>
        <end position="154"/>
    </location>
</feature>
<feature type="chain" id="PRO_0000005744" description="Collagen alpha-1(III) chain">
    <location>
        <begin position="155"/>
        <end position="1219"/>
    </location>
</feature>
<feature type="propeptide" id="PRO_0000005745" description="C-terminal propeptide">
    <location>
        <begin position="1220"/>
        <end position="1464"/>
    </location>
</feature>
<feature type="domain" description="VWFC" evidence="3">
    <location>
        <begin position="31"/>
        <end position="90"/>
    </location>
</feature>
<feature type="domain" description="Fibrillar collagen NC1" evidence="4">
    <location>
        <begin position="1230"/>
        <end position="1464"/>
    </location>
</feature>
<feature type="region of interest" description="Disordered" evidence="5">
    <location>
        <begin position="97"/>
        <end position="1195"/>
    </location>
</feature>
<feature type="region of interest" description="Nonhelical region (N-terminal)">
    <location>
        <begin position="155"/>
        <end position="169"/>
    </location>
</feature>
<feature type="region of interest" description="Triple-helical region">
    <location>
        <begin position="170"/>
        <end position="1195"/>
    </location>
</feature>
<feature type="compositionally biased region" description="Low complexity" evidence="5">
    <location>
        <begin position="100"/>
        <end position="109"/>
    </location>
</feature>
<feature type="compositionally biased region" description="Polar residues" evidence="5">
    <location>
        <begin position="147"/>
        <end position="156"/>
    </location>
</feature>
<feature type="compositionally biased region" description="Gly residues" evidence="5">
    <location>
        <begin position="164"/>
        <end position="173"/>
    </location>
</feature>
<feature type="compositionally biased region" description="Pro residues" evidence="5">
    <location>
        <begin position="174"/>
        <end position="184"/>
    </location>
</feature>
<feature type="compositionally biased region" description="Low complexity" evidence="5">
    <location>
        <begin position="186"/>
        <end position="198"/>
    </location>
</feature>
<feature type="compositionally biased region" description="Basic and acidic residues" evidence="5">
    <location>
        <begin position="228"/>
        <end position="240"/>
    </location>
</feature>
<feature type="compositionally biased region" description="Basic and acidic residues" evidence="5">
    <location>
        <begin position="265"/>
        <end position="276"/>
    </location>
</feature>
<feature type="compositionally biased region" description="Low complexity" evidence="5">
    <location>
        <begin position="310"/>
        <end position="321"/>
    </location>
</feature>
<feature type="compositionally biased region" description="Low complexity" evidence="5">
    <location>
        <begin position="354"/>
        <end position="379"/>
    </location>
</feature>
<feature type="compositionally biased region" description="Gly residues" evidence="5">
    <location>
        <begin position="389"/>
        <end position="398"/>
    </location>
</feature>
<feature type="compositionally biased region" description="Low complexity" evidence="5">
    <location>
        <begin position="399"/>
        <end position="412"/>
    </location>
</feature>
<feature type="compositionally biased region" description="Gly residues" evidence="5">
    <location>
        <begin position="527"/>
        <end position="548"/>
    </location>
</feature>
<feature type="compositionally biased region" description="Low complexity" evidence="5">
    <location>
        <begin position="606"/>
        <end position="615"/>
    </location>
</feature>
<feature type="compositionally biased region" description="Gly residues" evidence="5">
    <location>
        <begin position="641"/>
        <end position="650"/>
    </location>
</feature>
<feature type="compositionally biased region" description="Gly residues" evidence="5">
    <location>
        <begin position="668"/>
        <end position="677"/>
    </location>
</feature>
<feature type="compositionally biased region" description="Low complexity" evidence="5">
    <location>
        <begin position="678"/>
        <end position="691"/>
    </location>
</feature>
<feature type="compositionally biased region" description="Gly residues" evidence="5">
    <location>
        <begin position="692"/>
        <end position="708"/>
    </location>
</feature>
<feature type="compositionally biased region" description="Low complexity" evidence="5">
    <location>
        <begin position="717"/>
        <end position="727"/>
    </location>
</feature>
<feature type="compositionally biased region" description="Basic and acidic residues" evidence="5">
    <location>
        <begin position="822"/>
        <end position="834"/>
    </location>
</feature>
<feature type="compositionally biased region" description="Gly residues" evidence="5">
    <location>
        <begin position="863"/>
        <end position="879"/>
    </location>
</feature>
<feature type="compositionally biased region" description="Pro residues" evidence="5">
    <location>
        <begin position="889"/>
        <end position="906"/>
    </location>
</feature>
<feature type="compositionally biased region" description="Low complexity" evidence="5">
    <location>
        <begin position="907"/>
        <end position="934"/>
    </location>
</feature>
<feature type="compositionally biased region" description="Low complexity" evidence="5">
    <location>
        <begin position="945"/>
        <end position="960"/>
    </location>
</feature>
<feature type="compositionally biased region" description="Pro residues" evidence="5">
    <location>
        <begin position="1045"/>
        <end position="1054"/>
    </location>
</feature>
<feature type="compositionally biased region" description="Low complexity" evidence="5">
    <location>
        <begin position="1068"/>
        <end position="1084"/>
    </location>
</feature>
<feature type="compositionally biased region" description="Low complexity" evidence="5">
    <location>
        <begin position="1120"/>
        <end position="1132"/>
    </location>
</feature>
<feature type="compositionally biased region" description="Pro residues" evidence="5">
    <location>
        <begin position="1180"/>
        <end position="1192"/>
    </location>
</feature>
<feature type="binding site" evidence="1">
    <location>
        <position position="1278"/>
    </location>
    <ligand>
        <name>Ca(2+)</name>
        <dbReference type="ChEBI" id="CHEBI:29108"/>
    </ligand>
</feature>
<feature type="binding site" evidence="1">
    <location>
        <position position="1280"/>
    </location>
    <ligand>
        <name>Ca(2+)</name>
        <dbReference type="ChEBI" id="CHEBI:29108"/>
    </ligand>
</feature>
<feature type="binding site" evidence="1">
    <location>
        <position position="1281"/>
    </location>
    <ligand>
        <name>Ca(2+)</name>
        <dbReference type="ChEBI" id="CHEBI:29108"/>
    </ligand>
</feature>
<feature type="binding site" evidence="1">
    <location>
        <position position="1283"/>
    </location>
    <ligand>
        <name>Ca(2+)</name>
        <dbReference type="ChEBI" id="CHEBI:29108"/>
    </ligand>
</feature>
<feature type="binding site" evidence="1">
    <location>
        <position position="1286"/>
    </location>
    <ligand>
        <name>Ca(2+)</name>
        <dbReference type="ChEBI" id="CHEBI:29108"/>
    </ligand>
</feature>
<feature type="modified residue" description="5-hydroxylysine; alternate" evidence="1">
    <location>
        <position position="262"/>
    </location>
</feature>
<feature type="modified residue" description="5-hydroxylysine" evidence="1">
    <location>
        <position position="283"/>
    </location>
</feature>
<feature type="modified residue" description="5-hydroxylysine" evidence="1">
    <location>
        <position position="859"/>
    </location>
</feature>
<feature type="modified residue" description="5-hydroxylysine" evidence="1">
    <location>
        <position position="976"/>
    </location>
</feature>
<feature type="modified residue" description="5-hydroxylysine" evidence="1">
    <location>
        <position position="1093"/>
    </location>
</feature>
<feature type="modified residue" description="5-hydroxylysine" evidence="1">
    <location>
        <position position="1105"/>
    </location>
</feature>
<feature type="glycosylation site" description="O-linked (Gal...) hydroxylysine; alternate" evidence="1">
    <location>
        <position position="262"/>
    </location>
</feature>
<feature type="disulfide bond" description="Interchain" evidence="4">
    <location>
        <position position="1195"/>
    </location>
</feature>
<feature type="disulfide bond" description="Interchain" evidence="4">
    <location>
        <position position="1196"/>
    </location>
</feature>
<feature type="disulfide bond" evidence="4">
    <location>
        <begin position="1260"/>
        <end position="1292"/>
    </location>
</feature>
<feature type="disulfide bond" description="Interchain (with C-1283)" evidence="4">
    <location>
        <position position="1266"/>
    </location>
</feature>
<feature type="disulfide bond" description="Interchain (with C-1266)" evidence="4">
    <location>
        <position position="1283"/>
    </location>
</feature>
<feature type="disulfide bond" evidence="4">
    <location>
        <begin position="1300"/>
        <end position="1462"/>
    </location>
</feature>
<feature type="disulfide bond" evidence="4">
    <location>
        <begin position="1370"/>
        <end position="1415"/>
    </location>
</feature>
<organism>
    <name type="scientific">Mus musculus</name>
    <name type="common">Mouse</name>
    <dbReference type="NCBI Taxonomy" id="10090"/>
    <lineage>
        <taxon>Eukaryota</taxon>
        <taxon>Metazoa</taxon>
        <taxon>Chordata</taxon>
        <taxon>Craniata</taxon>
        <taxon>Vertebrata</taxon>
        <taxon>Euteleostomi</taxon>
        <taxon>Mammalia</taxon>
        <taxon>Eutheria</taxon>
        <taxon>Euarchontoglires</taxon>
        <taxon>Glires</taxon>
        <taxon>Rodentia</taxon>
        <taxon>Myomorpha</taxon>
        <taxon>Muroidea</taxon>
        <taxon>Muridae</taxon>
        <taxon>Murinae</taxon>
        <taxon>Mus</taxon>
        <taxon>Mus</taxon>
    </lineage>
</organism>
<accession>P08121</accession>
<accession>Q61429</accession>
<accession>Q9CRN7</accession>
<gene>
    <name type="primary">Col3a1</name>
</gene>
<name>CO3A1_MOUSE</name>
<reference key="1">
    <citation type="journal article" date="1994" name="Gene">
        <title>The mouse type-III procollagen-encoding gene: genomic cloning and complete DNA sequence.</title>
        <authorList>
            <person name="Toman D."/>
            <person name="de Crombrugghe B."/>
        </authorList>
    </citation>
    <scope>NUCLEOTIDE SEQUENCE [GENOMIC DNA]</scope>
    <source>
        <strain>C57BL/6 X DBA</strain>
        <tissue>Embryo</tissue>
    </source>
</reference>
<reference key="2">
    <citation type="journal article" date="2004" name="Genome Res.">
        <title>The status, quality, and expansion of the NIH full-length cDNA project: the Mammalian Gene Collection (MGC).</title>
        <authorList>
            <consortium name="The MGC Project Team"/>
        </authorList>
    </citation>
    <scope>NUCLEOTIDE SEQUENCE [LARGE SCALE MRNA]</scope>
    <source>
        <strain>C57BL/6J</strain>
        <tissue>Brain</tissue>
    </source>
</reference>
<reference key="3">
    <citation type="journal article" date="1987" name="Gene">
        <title>Complete nucleotide sequence of the N-terminal domains of the murine alpha-1 type-III collagen chain.</title>
        <authorList>
            <person name="Wood L."/>
            <person name="Theriault N."/>
            <person name="Vogeli G."/>
        </authorList>
    </citation>
    <scope>NUCLEOTIDE SEQUENCE [MRNA] OF 1-488</scope>
</reference>
<reference key="4">
    <citation type="journal article" date="1985" name="J. Biol. Chem.">
        <title>Identification of the promoter and first exon of the mouse alpha 1 (III) collagen gene.</title>
        <authorList>
            <person name="Liau G."/>
            <person name="Mudryj M."/>
            <person name="de Crombrugghe B."/>
        </authorList>
    </citation>
    <scope>NUCLEOTIDE SEQUENCE [GENOMIC DNA] OF 1-28</scope>
</reference>
<reference key="5">
    <citation type="journal article" date="2005" name="Science">
        <title>The transcriptional landscape of the mammalian genome.</title>
        <authorList>
            <person name="Carninci P."/>
            <person name="Kasukawa T."/>
            <person name="Katayama S."/>
            <person name="Gough J."/>
            <person name="Frith M.C."/>
            <person name="Maeda N."/>
            <person name="Oyama R."/>
            <person name="Ravasi T."/>
            <person name="Lenhard B."/>
            <person name="Wells C."/>
            <person name="Kodzius R."/>
            <person name="Shimokawa K."/>
            <person name="Bajic V.B."/>
            <person name="Brenner S.E."/>
            <person name="Batalov S."/>
            <person name="Forrest A.R."/>
            <person name="Zavolan M."/>
            <person name="Davis M.J."/>
            <person name="Wilming L.G."/>
            <person name="Aidinis V."/>
            <person name="Allen J.E."/>
            <person name="Ambesi-Impiombato A."/>
            <person name="Apweiler R."/>
            <person name="Aturaliya R.N."/>
            <person name="Bailey T.L."/>
            <person name="Bansal M."/>
            <person name="Baxter L."/>
            <person name="Beisel K.W."/>
            <person name="Bersano T."/>
            <person name="Bono H."/>
            <person name="Chalk A.M."/>
            <person name="Chiu K.P."/>
            <person name="Choudhary V."/>
            <person name="Christoffels A."/>
            <person name="Clutterbuck D.R."/>
            <person name="Crowe M.L."/>
            <person name="Dalla E."/>
            <person name="Dalrymple B.P."/>
            <person name="de Bono B."/>
            <person name="Della Gatta G."/>
            <person name="di Bernardo D."/>
            <person name="Down T."/>
            <person name="Engstrom P."/>
            <person name="Fagiolini M."/>
            <person name="Faulkner G."/>
            <person name="Fletcher C.F."/>
            <person name="Fukushima T."/>
            <person name="Furuno M."/>
            <person name="Futaki S."/>
            <person name="Gariboldi M."/>
            <person name="Georgii-Hemming P."/>
            <person name="Gingeras T.R."/>
            <person name="Gojobori T."/>
            <person name="Green R.E."/>
            <person name="Gustincich S."/>
            <person name="Harbers M."/>
            <person name="Hayashi Y."/>
            <person name="Hensch T.K."/>
            <person name="Hirokawa N."/>
            <person name="Hill D."/>
            <person name="Huminiecki L."/>
            <person name="Iacono M."/>
            <person name="Ikeo K."/>
            <person name="Iwama A."/>
            <person name="Ishikawa T."/>
            <person name="Jakt M."/>
            <person name="Kanapin A."/>
            <person name="Katoh M."/>
            <person name="Kawasawa Y."/>
            <person name="Kelso J."/>
            <person name="Kitamura H."/>
            <person name="Kitano H."/>
            <person name="Kollias G."/>
            <person name="Krishnan S.P."/>
            <person name="Kruger A."/>
            <person name="Kummerfeld S.K."/>
            <person name="Kurochkin I.V."/>
            <person name="Lareau L.F."/>
            <person name="Lazarevic D."/>
            <person name="Lipovich L."/>
            <person name="Liu J."/>
            <person name="Liuni S."/>
            <person name="McWilliam S."/>
            <person name="Madan Babu M."/>
            <person name="Madera M."/>
            <person name="Marchionni L."/>
            <person name="Matsuda H."/>
            <person name="Matsuzawa S."/>
            <person name="Miki H."/>
            <person name="Mignone F."/>
            <person name="Miyake S."/>
            <person name="Morris K."/>
            <person name="Mottagui-Tabar S."/>
            <person name="Mulder N."/>
            <person name="Nakano N."/>
            <person name="Nakauchi H."/>
            <person name="Ng P."/>
            <person name="Nilsson R."/>
            <person name="Nishiguchi S."/>
            <person name="Nishikawa S."/>
            <person name="Nori F."/>
            <person name="Ohara O."/>
            <person name="Okazaki Y."/>
            <person name="Orlando V."/>
            <person name="Pang K.C."/>
            <person name="Pavan W.J."/>
            <person name="Pavesi G."/>
            <person name="Pesole G."/>
            <person name="Petrovsky N."/>
            <person name="Piazza S."/>
            <person name="Reed J."/>
            <person name="Reid J.F."/>
            <person name="Ring B.Z."/>
            <person name="Ringwald M."/>
            <person name="Rost B."/>
            <person name="Ruan Y."/>
            <person name="Salzberg S.L."/>
            <person name="Sandelin A."/>
            <person name="Schneider C."/>
            <person name="Schoenbach C."/>
            <person name="Sekiguchi K."/>
            <person name="Semple C.A."/>
            <person name="Seno S."/>
            <person name="Sessa L."/>
            <person name="Sheng Y."/>
            <person name="Shibata Y."/>
            <person name="Shimada H."/>
            <person name="Shimada K."/>
            <person name="Silva D."/>
            <person name="Sinclair B."/>
            <person name="Sperling S."/>
            <person name="Stupka E."/>
            <person name="Sugiura K."/>
            <person name="Sultana R."/>
            <person name="Takenaka Y."/>
            <person name="Taki K."/>
            <person name="Tammoja K."/>
            <person name="Tan S.L."/>
            <person name="Tang S."/>
            <person name="Taylor M.S."/>
            <person name="Tegner J."/>
            <person name="Teichmann S.A."/>
            <person name="Ueda H.R."/>
            <person name="van Nimwegen E."/>
            <person name="Verardo R."/>
            <person name="Wei C.L."/>
            <person name="Yagi K."/>
            <person name="Yamanishi H."/>
            <person name="Zabarovsky E."/>
            <person name="Zhu S."/>
            <person name="Zimmer A."/>
            <person name="Hide W."/>
            <person name="Bult C."/>
            <person name="Grimmond S.M."/>
            <person name="Teasdale R.D."/>
            <person name="Liu E.T."/>
            <person name="Brusic V."/>
            <person name="Quackenbush J."/>
            <person name="Wahlestedt C."/>
            <person name="Mattick J.S."/>
            <person name="Hume D.A."/>
            <person name="Kai C."/>
            <person name="Sasaki D."/>
            <person name="Tomaru Y."/>
            <person name="Fukuda S."/>
            <person name="Kanamori-Katayama M."/>
            <person name="Suzuki M."/>
            <person name="Aoki J."/>
            <person name="Arakawa T."/>
            <person name="Iida J."/>
            <person name="Imamura K."/>
            <person name="Itoh M."/>
            <person name="Kato T."/>
            <person name="Kawaji H."/>
            <person name="Kawagashira N."/>
            <person name="Kawashima T."/>
            <person name="Kojima M."/>
            <person name="Kondo S."/>
            <person name="Konno H."/>
            <person name="Nakano K."/>
            <person name="Ninomiya N."/>
            <person name="Nishio T."/>
            <person name="Okada M."/>
            <person name="Plessy C."/>
            <person name="Shibata K."/>
            <person name="Shiraki T."/>
            <person name="Suzuki S."/>
            <person name="Tagami M."/>
            <person name="Waki K."/>
            <person name="Watahiki A."/>
            <person name="Okamura-Oho Y."/>
            <person name="Suzuki H."/>
            <person name="Kawai J."/>
            <person name="Hayashizaki Y."/>
        </authorList>
    </citation>
    <scope>NUCLEOTIDE SEQUENCE [LARGE SCALE MRNA] OF 810-1464</scope>
    <source>
        <strain>C57BL/6J</strain>
        <tissue>Embryonic head</tissue>
    </source>
</reference>
<reference key="6">
    <citation type="journal article" date="1991" name="Biochim. Biophys. Acta">
        <title>Specific hybridization probes for mouse type I, II, III and IX collagen mRNAs.</title>
        <authorList>
            <person name="Metsaeranta M."/>
            <person name="Toman D."/>
            <person name="de Crombrugghe B."/>
            <person name="Vuorio E."/>
        </authorList>
    </citation>
    <scope>NUCLEOTIDE SEQUENCE OF 1442-1464</scope>
    <source>
        <strain>C57BL/6J</strain>
    </source>
</reference>
<reference key="7">
    <citation type="journal article" date="2010" name="Cell">
        <title>A tissue-specific atlas of mouse protein phosphorylation and expression.</title>
        <authorList>
            <person name="Huttlin E.L."/>
            <person name="Jedrychowski M.P."/>
            <person name="Elias J.E."/>
            <person name="Goswami T."/>
            <person name="Rad R."/>
            <person name="Beausoleil S.A."/>
            <person name="Villen J."/>
            <person name="Haas W."/>
            <person name="Sowa M.E."/>
            <person name="Gygi S.P."/>
        </authorList>
    </citation>
    <scope>IDENTIFICATION BY MASS SPECTROMETRY [LARGE SCALE ANALYSIS]</scope>
    <source>
        <tissue>Brown adipose tissue</tissue>
        <tissue>Pancreas</tissue>
    </source>
</reference>
<reference key="8">
    <citation type="journal article" date="2011" name="Proc. Natl. Acad. Sci. U.S.A.">
        <title>G protein-coupled receptor 56 and collagen III, a receptor-ligand pair, regulates cortical development and lamination.</title>
        <authorList>
            <person name="Luo R."/>
            <person name="Jeong S.J."/>
            <person name="Jin Z."/>
            <person name="Strokes N."/>
            <person name="Li S."/>
            <person name="Piao X."/>
        </authorList>
    </citation>
    <scope>FUNCTION</scope>
    <scope>RECEPTOR-BINDING</scope>
    <scope>DISRUPTION PHENOTYPE</scope>
    <scope>TISSUE SPECIFICITY</scope>
</reference>
<keyword id="KW-0106">Calcium</keyword>
<keyword id="KW-0176">Collagen</keyword>
<keyword id="KW-1015">Disulfide bond</keyword>
<keyword id="KW-0272">Extracellular matrix</keyword>
<keyword id="KW-0325">Glycoprotein</keyword>
<keyword id="KW-0379">Hydroxylation</keyword>
<keyword id="KW-0479">Metal-binding</keyword>
<keyword id="KW-1185">Reference proteome</keyword>
<keyword id="KW-0677">Repeat</keyword>
<keyword id="KW-0964">Secreted</keyword>
<keyword id="KW-0732">Signal</keyword>
<proteinExistence type="evidence at protein level"/>
<comment type="function">
    <text evidence="6">Collagen type III occurs in most soft connective tissues along with type I collagen. Involved in regulation of cortical development. Is the major ligand of ADGRG1 in the developing brain and binding to ADGRG1 inhibits neuronal migration and activates the RhoA pathway by coupling ADGRG1 to GNA13 and possibly GNA12.</text>
</comment>
<comment type="subunit">
    <text evidence="2">Trimers of identical alpha 1(III) chains. The chains are linked to each other by interchain disulfide bonds. Trimers are also cross-linked via hydroxylysines. Interacts with ADGRG1 (By similarity).</text>
</comment>
<comment type="subcellular location">
    <subcellularLocation>
        <location evidence="4">Secreted</location>
        <location evidence="4">Extracellular space</location>
        <location evidence="4">Extracellular matrix</location>
    </subcellularLocation>
</comment>
<comment type="tissue specificity">
    <text evidence="6">Expressed in embryonic brain, specifically in the meninges, pial basement membrane and blood vessels (at protein level).</text>
</comment>
<comment type="domain">
    <text evidence="1">The C-terminal propeptide, also known as COLFI domain, have crucial roles in tissue growth and repair by controlling both the intracellular assembly of procollagen molecules and the extracellular assembly of collagen fibrils. It binds a calcium ion which is essential for its function (By similarity).</text>
</comment>
<comment type="PTM">
    <text>Proline residues at the third position of the tripeptide repeating unit (G-X-Y) are hydroxylated in some or all of the chains.</text>
</comment>
<comment type="PTM">
    <text evidence="1">O-linked glycan consists of a Glc-Gal disaccharide bound to the oxygen atom of a post-translationally added hydroxyl group.</text>
</comment>
<comment type="disruption phenotype">
    <text evidence="6">Neuronal ectopias and abnormal cortical lamination.</text>
</comment>
<comment type="similarity">
    <text evidence="4">Belongs to the fibrillar collagen family.</text>
</comment>